<keyword id="KW-0131">Cell cycle</keyword>
<keyword id="KW-0132">Cell division</keyword>
<keyword id="KW-0997">Cell inner membrane</keyword>
<keyword id="KW-1003">Cell membrane</keyword>
<keyword id="KW-0133">Cell shape</keyword>
<keyword id="KW-0961">Cell wall biogenesis/degradation</keyword>
<keyword id="KW-0328">Glycosyltransferase</keyword>
<keyword id="KW-0472">Membrane</keyword>
<keyword id="KW-0573">Peptidoglycan synthesis</keyword>
<keyword id="KW-0808">Transferase</keyword>
<dbReference type="EC" id="2.4.1.227" evidence="1"/>
<dbReference type="EMBL" id="CP001097">
    <property type="protein sequence ID" value="ACD91520.1"/>
    <property type="molecule type" value="Genomic_DNA"/>
</dbReference>
<dbReference type="RefSeq" id="WP_012467384.1">
    <property type="nucleotide sequence ID" value="NC_010803.1"/>
</dbReference>
<dbReference type="SMR" id="B3EIK8"/>
<dbReference type="STRING" id="290315.Clim_2502"/>
<dbReference type="CAZy" id="GT28">
    <property type="family name" value="Glycosyltransferase Family 28"/>
</dbReference>
<dbReference type="KEGG" id="cli:Clim_2502"/>
<dbReference type="eggNOG" id="COG0707">
    <property type="taxonomic scope" value="Bacteria"/>
</dbReference>
<dbReference type="HOGENOM" id="CLU_037404_0_1_10"/>
<dbReference type="OrthoDB" id="9808936at2"/>
<dbReference type="UniPathway" id="UPA00219"/>
<dbReference type="Proteomes" id="UP000008841">
    <property type="component" value="Chromosome"/>
</dbReference>
<dbReference type="GO" id="GO:0005886">
    <property type="term" value="C:plasma membrane"/>
    <property type="evidence" value="ECO:0007669"/>
    <property type="project" value="UniProtKB-SubCell"/>
</dbReference>
<dbReference type="GO" id="GO:0051991">
    <property type="term" value="F:UDP-N-acetyl-D-glucosamine:N-acetylmuramoyl-L-alanyl-D-glutamyl-meso-2,6-diaminopimelyl-D-alanyl-D-alanine-diphosphoundecaprenol 4-beta-N-acetylglucosaminlytransferase activity"/>
    <property type="evidence" value="ECO:0007669"/>
    <property type="project" value="RHEA"/>
</dbReference>
<dbReference type="GO" id="GO:0050511">
    <property type="term" value="F:undecaprenyldiphospho-muramoylpentapeptide beta-N-acetylglucosaminyltransferase activity"/>
    <property type="evidence" value="ECO:0007669"/>
    <property type="project" value="UniProtKB-UniRule"/>
</dbReference>
<dbReference type="GO" id="GO:0005975">
    <property type="term" value="P:carbohydrate metabolic process"/>
    <property type="evidence" value="ECO:0007669"/>
    <property type="project" value="InterPro"/>
</dbReference>
<dbReference type="GO" id="GO:0051301">
    <property type="term" value="P:cell division"/>
    <property type="evidence" value="ECO:0007669"/>
    <property type="project" value="UniProtKB-KW"/>
</dbReference>
<dbReference type="GO" id="GO:0071555">
    <property type="term" value="P:cell wall organization"/>
    <property type="evidence" value="ECO:0007669"/>
    <property type="project" value="UniProtKB-KW"/>
</dbReference>
<dbReference type="GO" id="GO:0030259">
    <property type="term" value="P:lipid glycosylation"/>
    <property type="evidence" value="ECO:0007669"/>
    <property type="project" value="UniProtKB-UniRule"/>
</dbReference>
<dbReference type="GO" id="GO:0009252">
    <property type="term" value="P:peptidoglycan biosynthetic process"/>
    <property type="evidence" value="ECO:0007669"/>
    <property type="project" value="UniProtKB-UniRule"/>
</dbReference>
<dbReference type="GO" id="GO:0008360">
    <property type="term" value="P:regulation of cell shape"/>
    <property type="evidence" value="ECO:0007669"/>
    <property type="project" value="UniProtKB-KW"/>
</dbReference>
<dbReference type="CDD" id="cd03785">
    <property type="entry name" value="GT28_MurG"/>
    <property type="match status" value="1"/>
</dbReference>
<dbReference type="Gene3D" id="3.40.50.2000">
    <property type="entry name" value="Glycogen Phosphorylase B"/>
    <property type="match status" value="2"/>
</dbReference>
<dbReference type="HAMAP" id="MF_00033">
    <property type="entry name" value="MurG"/>
    <property type="match status" value="1"/>
</dbReference>
<dbReference type="InterPro" id="IPR006009">
    <property type="entry name" value="GlcNAc_MurG"/>
</dbReference>
<dbReference type="InterPro" id="IPR007235">
    <property type="entry name" value="Glyco_trans_28_C"/>
</dbReference>
<dbReference type="InterPro" id="IPR004276">
    <property type="entry name" value="GlycoTrans_28_N"/>
</dbReference>
<dbReference type="NCBIfam" id="TIGR01133">
    <property type="entry name" value="murG"/>
    <property type="match status" value="1"/>
</dbReference>
<dbReference type="PANTHER" id="PTHR21015:SF22">
    <property type="entry name" value="GLYCOSYLTRANSFERASE"/>
    <property type="match status" value="1"/>
</dbReference>
<dbReference type="PANTHER" id="PTHR21015">
    <property type="entry name" value="UDP-N-ACETYLGLUCOSAMINE--N-ACETYLMURAMYL-(PENTAPEPTIDE) PYROPHOSPHORYL-UNDECAPRENOL N-ACETYLGLUCOSAMINE TRANSFERASE 1"/>
    <property type="match status" value="1"/>
</dbReference>
<dbReference type="Pfam" id="PF04101">
    <property type="entry name" value="Glyco_tran_28_C"/>
    <property type="match status" value="1"/>
</dbReference>
<dbReference type="Pfam" id="PF03033">
    <property type="entry name" value="Glyco_transf_28"/>
    <property type="match status" value="1"/>
</dbReference>
<dbReference type="SUPFAM" id="SSF53756">
    <property type="entry name" value="UDP-Glycosyltransferase/glycogen phosphorylase"/>
    <property type="match status" value="1"/>
</dbReference>
<gene>
    <name evidence="1" type="primary">murG</name>
    <name type="ordered locus">Clim_2502</name>
</gene>
<proteinExistence type="inferred from homology"/>
<evidence type="ECO:0000255" key="1">
    <source>
        <dbReference type="HAMAP-Rule" id="MF_00033"/>
    </source>
</evidence>
<sequence>MNVLFAGGGTGGHLYPAVAMAVELLKLVPGASVSFAGTKNGIEASEIPRLGYRLHLLPVRGLKRGGSLRAILANVGILIDFAGALINAGGLIRRENPDVVVGTGGFVSAPVLLAAQMMGRRTLIQEQNAFPGVTTKLLSILASEIHLSFSEAQQYIRRNKGVFVSGNPARSFTLNSREKAQEHFGLQQQLPTLLVFGGSRGARSINSAVLKWIDAITERANLVWQTGALDYDRIRQQVKHSGRLWIGPYIEQMGDAYSASDLVMCRAGASSIAELTNTGKPSVLVPYPYATGDHQRYNAQALVGTGAAMLIDDSHLDAPEAQQIVLDLLHDPHRLSAMGASCGRLAHPDAALQLARRIIQLAKP</sequence>
<protein>
    <recommendedName>
        <fullName evidence="1">UDP-N-acetylglucosamine--N-acetylmuramyl-(pentapeptide) pyrophosphoryl-undecaprenol N-acetylglucosamine transferase</fullName>
        <ecNumber evidence="1">2.4.1.227</ecNumber>
    </recommendedName>
    <alternativeName>
        <fullName evidence="1">Undecaprenyl-PP-MurNAc-pentapeptide-UDPGlcNAc GlcNAc transferase</fullName>
    </alternativeName>
</protein>
<accession>B3EIK8</accession>
<organism>
    <name type="scientific">Chlorobium limicola (strain DSM 245 / NBRC 103803 / 6330)</name>
    <dbReference type="NCBI Taxonomy" id="290315"/>
    <lineage>
        <taxon>Bacteria</taxon>
        <taxon>Pseudomonadati</taxon>
        <taxon>Chlorobiota</taxon>
        <taxon>Chlorobiia</taxon>
        <taxon>Chlorobiales</taxon>
        <taxon>Chlorobiaceae</taxon>
        <taxon>Chlorobium/Pelodictyon group</taxon>
        <taxon>Chlorobium</taxon>
    </lineage>
</organism>
<comment type="function">
    <text evidence="1">Cell wall formation. Catalyzes the transfer of a GlcNAc subunit on undecaprenyl-pyrophosphoryl-MurNAc-pentapeptide (lipid intermediate I) to form undecaprenyl-pyrophosphoryl-MurNAc-(pentapeptide)GlcNAc (lipid intermediate II).</text>
</comment>
<comment type="catalytic activity">
    <reaction evidence="1">
        <text>di-trans,octa-cis-undecaprenyl diphospho-N-acetyl-alpha-D-muramoyl-L-alanyl-D-glutamyl-meso-2,6-diaminopimeloyl-D-alanyl-D-alanine + UDP-N-acetyl-alpha-D-glucosamine = di-trans,octa-cis-undecaprenyl diphospho-[N-acetyl-alpha-D-glucosaminyl-(1-&gt;4)]-N-acetyl-alpha-D-muramoyl-L-alanyl-D-glutamyl-meso-2,6-diaminopimeloyl-D-alanyl-D-alanine + UDP + H(+)</text>
        <dbReference type="Rhea" id="RHEA:31227"/>
        <dbReference type="ChEBI" id="CHEBI:15378"/>
        <dbReference type="ChEBI" id="CHEBI:57705"/>
        <dbReference type="ChEBI" id="CHEBI:58223"/>
        <dbReference type="ChEBI" id="CHEBI:61387"/>
        <dbReference type="ChEBI" id="CHEBI:61388"/>
        <dbReference type="EC" id="2.4.1.227"/>
    </reaction>
</comment>
<comment type="pathway">
    <text evidence="1">Cell wall biogenesis; peptidoglycan biosynthesis.</text>
</comment>
<comment type="subcellular location">
    <subcellularLocation>
        <location evidence="1">Cell inner membrane</location>
        <topology evidence="1">Peripheral membrane protein</topology>
        <orientation evidence="1">Cytoplasmic side</orientation>
    </subcellularLocation>
</comment>
<comment type="similarity">
    <text evidence="1">Belongs to the glycosyltransferase 28 family. MurG subfamily.</text>
</comment>
<feature type="chain" id="PRO_1000090415" description="UDP-N-acetylglucosamine--N-acetylmuramyl-(pentapeptide) pyrophosphoryl-undecaprenol N-acetylglucosamine transferase">
    <location>
        <begin position="1"/>
        <end position="364"/>
    </location>
</feature>
<feature type="binding site" evidence="1">
    <location>
        <begin position="10"/>
        <end position="12"/>
    </location>
    <ligand>
        <name>UDP-N-acetyl-alpha-D-glucosamine</name>
        <dbReference type="ChEBI" id="CHEBI:57705"/>
    </ligand>
</feature>
<feature type="binding site" evidence="1">
    <location>
        <position position="128"/>
    </location>
    <ligand>
        <name>UDP-N-acetyl-alpha-D-glucosamine</name>
        <dbReference type="ChEBI" id="CHEBI:57705"/>
    </ligand>
</feature>
<feature type="binding site" evidence="1">
    <location>
        <position position="170"/>
    </location>
    <ligand>
        <name>UDP-N-acetyl-alpha-D-glucosamine</name>
        <dbReference type="ChEBI" id="CHEBI:57705"/>
    </ligand>
</feature>
<feature type="binding site" evidence="1">
    <location>
        <position position="199"/>
    </location>
    <ligand>
        <name>UDP-N-acetyl-alpha-D-glucosamine</name>
        <dbReference type="ChEBI" id="CHEBI:57705"/>
    </ligand>
</feature>
<feature type="binding site" evidence="1">
    <location>
        <position position="250"/>
    </location>
    <ligand>
        <name>UDP-N-acetyl-alpha-D-glucosamine</name>
        <dbReference type="ChEBI" id="CHEBI:57705"/>
    </ligand>
</feature>
<feature type="binding site" evidence="1">
    <location>
        <position position="295"/>
    </location>
    <ligand>
        <name>UDP-N-acetyl-alpha-D-glucosamine</name>
        <dbReference type="ChEBI" id="CHEBI:57705"/>
    </ligand>
</feature>
<name>MURG_CHLL2</name>
<reference key="1">
    <citation type="submission" date="2008-05" db="EMBL/GenBank/DDBJ databases">
        <title>Complete sequence of Chlorobium limicola DSM 245.</title>
        <authorList>
            <consortium name="US DOE Joint Genome Institute"/>
            <person name="Lucas S."/>
            <person name="Copeland A."/>
            <person name="Lapidus A."/>
            <person name="Glavina del Rio T."/>
            <person name="Dalin E."/>
            <person name="Tice H."/>
            <person name="Bruce D."/>
            <person name="Goodwin L."/>
            <person name="Pitluck S."/>
            <person name="Schmutz J."/>
            <person name="Larimer F."/>
            <person name="Land M."/>
            <person name="Hauser L."/>
            <person name="Kyrpides N."/>
            <person name="Ovchinnikova G."/>
            <person name="Zhao F."/>
            <person name="Li T."/>
            <person name="Liu Z."/>
            <person name="Overmann J."/>
            <person name="Bryant D.A."/>
            <person name="Richardson P."/>
        </authorList>
    </citation>
    <scope>NUCLEOTIDE SEQUENCE [LARGE SCALE GENOMIC DNA]</scope>
    <source>
        <strain>DSM 245 / NBRC 103803 / 6330</strain>
    </source>
</reference>